<organism>
    <name type="scientific">Dictyostelium discoideum</name>
    <name type="common">Social amoeba</name>
    <dbReference type="NCBI Taxonomy" id="44689"/>
    <lineage>
        <taxon>Eukaryota</taxon>
        <taxon>Amoebozoa</taxon>
        <taxon>Evosea</taxon>
        <taxon>Eumycetozoa</taxon>
        <taxon>Dictyostelia</taxon>
        <taxon>Dictyosteliales</taxon>
        <taxon>Dictyosteliaceae</taxon>
        <taxon>Dictyostelium</taxon>
    </lineage>
</organism>
<protein>
    <recommendedName>
        <fullName>COMM domain-containing protein 4</fullName>
    </recommendedName>
</protein>
<reference key="1">
    <citation type="journal article" date="2002" name="Nature">
        <title>Sequence and analysis of chromosome 2 of Dictyostelium discoideum.</title>
        <authorList>
            <person name="Gloeckner G."/>
            <person name="Eichinger L."/>
            <person name="Szafranski K."/>
            <person name="Pachebat J.A."/>
            <person name="Bankier A.T."/>
            <person name="Dear P.H."/>
            <person name="Lehmann R."/>
            <person name="Baumgart C."/>
            <person name="Parra G."/>
            <person name="Abril J.F."/>
            <person name="Guigo R."/>
            <person name="Kumpf K."/>
            <person name="Tunggal B."/>
            <person name="Cox E.C."/>
            <person name="Quail M.A."/>
            <person name="Platzer M."/>
            <person name="Rosenthal A."/>
            <person name="Noegel A.A."/>
        </authorList>
    </citation>
    <scope>NUCLEOTIDE SEQUENCE [LARGE SCALE GENOMIC DNA]</scope>
    <source>
        <strain>AX4</strain>
    </source>
</reference>
<reference key="2">
    <citation type="journal article" date="2005" name="Nature">
        <title>The genome of the social amoeba Dictyostelium discoideum.</title>
        <authorList>
            <person name="Eichinger L."/>
            <person name="Pachebat J.A."/>
            <person name="Gloeckner G."/>
            <person name="Rajandream M.A."/>
            <person name="Sucgang R."/>
            <person name="Berriman M."/>
            <person name="Song J."/>
            <person name="Olsen R."/>
            <person name="Szafranski K."/>
            <person name="Xu Q."/>
            <person name="Tunggal B."/>
            <person name="Kummerfeld S."/>
            <person name="Madera M."/>
            <person name="Konfortov B.A."/>
            <person name="Rivero F."/>
            <person name="Bankier A.T."/>
            <person name="Lehmann R."/>
            <person name="Hamlin N."/>
            <person name="Davies R."/>
            <person name="Gaudet P."/>
            <person name="Fey P."/>
            <person name="Pilcher K."/>
            <person name="Chen G."/>
            <person name="Saunders D."/>
            <person name="Sodergren E.J."/>
            <person name="Davis P."/>
            <person name="Kerhornou A."/>
            <person name="Nie X."/>
            <person name="Hall N."/>
            <person name="Anjard C."/>
            <person name="Hemphill L."/>
            <person name="Bason N."/>
            <person name="Farbrother P."/>
            <person name="Desany B."/>
            <person name="Just E."/>
            <person name="Morio T."/>
            <person name="Rost R."/>
            <person name="Churcher C.M."/>
            <person name="Cooper J."/>
            <person name="Haydock S."/>
            <person name="van Driessche N."/>
            <person name="Cronin A."/>
            <person name="Goodhead I."/>
            <person name="Muzny D.M."/>
            <person name="Mourier T."/>
            <person name="Pain A."/>
            <person name="Lu M."/>
            <person name="Harper D."/>
            <person name="Lindsay R."/>
            <person name="Hauser H."/>
            <person name="James K.D."/>
            <person name="Quiles M."/>
            <person name="Madan Babu M."/>
            <person name="Saito T."/>
            <person name="Buchrieser C."/>
            <person name="Wardroper A."/>
            <person name="Felder M."/>
            <person name="Thangavelu M."/>
            <person name="Johnson D."/>
            <person name="Knights A."/>
            <person name="Loulseged H."/>
            <person name="Mungall K.L."/>
            <person name="Oliver K."/>
            <person name="Price C."/>
            <person name="Quail M.A."/>
            <person name="Urushihara H."/>
            <person name="Hernandez J."/>
            <person name="Rabbinowitsch E."/>
            <person name="Steffen D."/>
            <person name="Sanders M."/>
            <person name="Ma J."/>
            <person name="Kohara Y."/>
            <person name="Sharp S."/>
            <person name="Simmonds M.N."/>
            <person name="Spiegler S."/>
            <person name="Tivey A."/>
            <person name="Sugano S."/>
            <person name="White B."/>
            <person name="Walker D."/>
            <person name="Woodward J.R."/>
            <person name="Winckler T."/>
            <person name="Tanaka Y."/>
            <person name="Shaulsky G."/>
            <person name="Schleicher M."/>
            <person name="Weinstock G.M."/>
            <person name="Rosenthal A."/>
            <person name="Cox E.C."/>
            <person name="Chisholm R.L."/>
            <person name="Gibbs R.A."/>
            <person name="Loomis W.F."/>
            <person name="Platzer M."/>
            <person name="Kay R.R."/>
            <person name="Williams J.G."/>
            <person name="Dear P.H."/>
            <person name="Noegel A.A."/>
            <person name="Barrell B.G."/>
            <person name="Kuspa A."/>
        </authorList>
    </citation>
    <scope>NUCLEOTIDE SEQUENCE [LARGE SCALE GENOMIC DNA]</scope>
    <source>
        <strain>AX4</strain>
    </source>
</reference>
<gene>
    <name type="primary">commd4</name>
    <name type="ORF">DDB_G0277089</name>
</gene>
<accession>Q550I8</accession>
<accession>Q86L13</accession>
<comment type="function">
    <text evidence="1">Scaffold protein in the commander complex that is essential for endosomal recycling of transmembrane cargos; the commander complex is composed of the CCC subcomplex and the retriever subcomplex.</text>
</comment>
<comment type="subunit">
    <text evidence="1">Component of the commander complex consisting of the CCC subcomplex and the retriever subcomplex (By similarity). Component of the CCC subcomplex (By similarity).</text>
</comment>
<comment type="similarity">
    <text evidence="3">Belongs to the COMM domain-containing protein 4 family.</text>
</comment>
<keyword id="KW-1185">Reference proteome</keyword>
<feature type="chain" id="PRO_0000327464" description="COMM domain-containing protein 4">
    <location>
        <begin position="1"/>
        <end position="177"/>
    </location>
</feature>
<feature type="domain" description="COMM" evidence="2">
    <location>
        <begin position="107"/>
        <end position="176"/>
    </location>
</feature>
<proteinExistence type="inferred from homology"/>
<sequence length="177" mass="20147">MTNIRIKLLTVQVITSLASGENIDFEKVEKLVKDAGFVIGDIKALIAAIHFIIFNSVKNDVDESTLSTELQQLGLPKEHCDSISRAFREHKEKLRSIFHNNTLKLPSLHSLDWRVDFILSSNTIQEVNSPSVQLNFKVKNHSNNEITNHPFEISAKKFNVLYYELKGAKLLMETVNQ</sequence>
<dbReference type="EMBL" id="AAFI02000019">
    <property type="protein sequence ID" value="EAL69046.1"/>
    <property type="molecule type" value="Genomic_DNA"/>
</dbReference>
<dbReference type="RefSeq" id="XP_642944.1">
    <property type="nucleotide sequence ID" value="XM_637852.1"/>
</dbReference>
<dbReference type="SMR" id="Q550I8"/>
<dbReference type="FunCoup" id="Q550I8">
    <property type="interactions" value="62"/>
</dbReference>
<dbReference type="STRING" id="44689.Q550I8"/>
<dbReference type="PaxDb" id="44689-DDB0266455"/>
<dbReference type="EnsemblProtists" id="EAL69046">
    <property type="protein sequence ID" value="EAL69046"/>
    <property type="gene ID" value="DDB_G0277089"/>
</dbReference>
<dbReference type="GeneID" id="8620813"/>
<dbReference type="KEGG" id="ddi:DDB_G0277089"/>
<dbReference type="dictyBase" id="DDB_G0277089">
    <property type="gene designation" value="commd4"/>
</dbReference>
<dbReference type="VEuPathDB" id="AmoebaDB:DDB_G0277089"/>
<dbReference type="eggNOG" id="ENOG502QSP3">
    <property type="taxonomic scope" value="Eukaryota"/>
</dbReference>
<dbReference type="HOGENOM" id="CLU_095496_0_0_1"/>
<dbReference type="InParanoid" id="Q550I8"/>
<dbReference type="OMA" id="RDCPDWL"/>
<dbReference type="PhylomeDB" id="Q550I8"/>
<dbReference type="Reactome" id="R-DDI-8951664">
    <property type="pathway name" value="Neddylation"/>
</dbReference>
<dbReference type="PRO" id="PR:Q550I8"/>
<dbReference type="Proteomes" id="UP000002195">
    <property type="component" value="Chromosome 2"/>
</dbReference>
<dbReference type="GO" id="GO:0007165">
    <property type="term" value="P:signal transduction"/>
    <property type="evidence" value="ECO:0000318"/>
    <property type="project" value="GO_Central"/>
</dbReference>
<dbReference type="CDD" id="cd04752">
    <property type="entry name" value="Commd4"/>
    <property type="match status" value="1"/>
</dbReference>
<dbReference type="InterPro" id="IPR017920">
    <property type="entry name" value="COMM"/>
</dbReference>
<dbReference type="InterPro" id="IPR037356">
    <property type="entry name" value="COMMD4"/>
</dbReference>
<dbReference type="InterPro" id="IPR047155">
    <property type="entry name" value="COMMD4/6/7/8"/>
</dbReference>
<dbReference type="PANTHER" id="PTHR16231:SF4">
    <property type="entry name" value="COMM DOMAIN-CONTAINING PROTEIN 4"/>
    <property type="match status" value="1"/>
</dbReference>
<dbReference type="PANTHER" id="PTHR16231">
    <property type="entry name" value="COMM DOMAIN-CONTAINING PROTEIN 4-8 FAMILY MEMBER"/>
    <property type="match status" value="1"/>
</dbReference>
<dbReference type="Pfam" id="PF07258">
    <property type="entry name" value="COMM_domain"/>
    <property type="match status" value="1"/>
</dbReference>
<dbReference type="Pfam" id="PF21672">
    <property type="entry name" value="COMM_HN"/>
    <property type="match status" value="1"/>
</dbReference>
<dbReference type="PROSITE" id="PS51269">
    <property type="entry name" value="COMM"/>
    <property type="match status" value="1"/>
</dbReference>
<evidence type="ECO:0000250" key="1">
    <source>
        <dbReference type="UniProtKB" id="Q9H0A8"/>
    </source>
</evidence>
<evidence type="ECO:0000255" key="2">
    <source>
        <dbReference type="PROSITE-ProRule" id="PRU00602"/>
    </source>
</evidence>
<evidence type="ECO:0000305" key="3"/>
<name>COMD4_DICDI</name>